<gene>
    <name type="ordered locus">LJ_0501</name>
</gene>
<sequence>MEKYDLAIIGAGPVGLFAASFANLHGLKTITFDALDEVGGQINMLYPQKDIKDIPAFSSIKGKELVSRLFEQTENTKLTLSHKVKKISFSTGEDIIIDDDYQVKSLLIATGLGAFKPKTLPLSTTPELQAHIHYSMQHPEIFSNKKVAILGGGDSALDWALELSKTSDVYVVHRRNEFRGLESSVSQLKSLKNVELLTPYLPKELHLNNNRIELVLHRVGASHDFITKDVDEILVAYGFKSDNRQLRKWGIELENNLISVSQTMQTNLPHVYAIGDAITYPGRVPMIALGFGEAQIAISSIMQDLFPEKTMTFHSTSI</sequence>
<name>FENR_LACJO</name>
<dbReference type="EC" id="1.18.1.2" evidence="1"/>
<dbReference type="EMBL" id="AE017198">
    <property type="protein sequence ID" value="AAS08493.1"/>
    <property type="molecule type" value="Genomic_DNA"/>
</dbReference>
<dbReference type="RefSeq" id="WP_011161624.1">
    <property type="nucleotide sequence ID" value="NC_005362.1"/>
</dbReference>
<dbReference type="SMR" id="Q74KS6"/>
<dbReference type="KEGG" id="ljo:LJ_0501"/>
<dbReference type="PATRIC" id="fig|257314.6.peg.528"/>
<dbReference type="eggNOG" id="COG0492">
    <property type="taxonomic scope" value="Bacteria"/>
</dbReference>
<dbReference type="HOGENOM" id="CLU_031864_5_5_9"/>
<dbReference type="Proteomes" id="UP000000581">
    <property type="component" value="Chromosome"/>
</dbReference>
<dbReference type="GO" id="GO:0004324">
    <property type="term" value="F:ferredoxin-NADP+ reductase activity"/>
    <property type="evidence" value="ECO:0007669"/>
    <property type="project" value="UniProtKB-UniRule"/>
</dbReference>
<dbReference type="GO" id="GO:0050660">
    <property type="term" value="F:flavin adenine dinucleotide binding"/>
    <property type="evidence" value="ECO:0007669"/>
    <property type="project" value="UniProtKB-UniRule"/>
</dbReference>
<dbReference type="GO" id="GO:0050661">
    <property type="term" value="F:NADP binding"/>
    <property type="evidence" value="ECO:0007669"/>
    <property type="project" value="UniProtKB-UniRule"/>
</dbReference>
<dbReference type="Gene3D" id="3.50.50.60">
    <property type="entry name" value="FAD/NAD(P)-binding domain"/>
    <property type="match status" value="2"/>
</dbReference>
<dbReference type="HAMAP" id="MF_01685">
    <property type="entry name" value="FENR2"/>
    <property type="match status" value="1"/>
</dbReference>
<dbReference type="InterPro" id="IPR036188">
    <property type="entry name" value="FAD/NAD-bd_sf"/>
</dbReference>
<dbReference type="InterPro" id="IPR023753">
    <property type="entry name" value="FAD/NAD-binding_dom"/>
</dbReference>
<dbReference type="InterPro" id="IPR022890">
    <property type="entry name" value="Fd--NADP_Rdtase_type_2"/>
</dbReference>
<dbReference type="InterPro" id="IPR050097">
    <property type="entry name" value="Ferredoxin-NADP_redctase_2"/>
</dbReference>
<dbReference type="PANTHER" id="PTHR48105">
    <property type="entry name" value="THIOREDOXIN REDUCTASE 1-RELATED-RELATED"/>
    <property type="match status" value="1"/>
</dbReference>
<dbReference type="Pfam" id="PF07992">
    <property type="entry name" value="Pyr_redox_2"/>
    <property type="match status" value="1"/>
</dbReference>
<dbReference type="PRINTS" id="PR00368">
    <property type="entry name" value="FADPNR"/>
</dbReference>
<dbReference type="PRINTS" id="PR00469">
    <property type="entry name" value="PNDRDTASEII"/>
</dbReference>
<dbReference type="SUPFAM" id="SSF51905">
    <property type="entry name" value="FAD/NAD(P)-binding domain"/>
    <property type="match status" value="1"/>
</dbReference>
<feature type="chain" id="PRO_0000364856" description="Ferredoxin--NADP reductase">
    <location>
        <begin position="1"/>
        <end position="318"/>
    </location>
</feature>
<feature type="binding site" evidence="1">
    <location>
        <position position="33"/>
    </location>
    <ligand>
        <name>FAD</name>
        <dbReference type="ChEBI" id="CHEBI:57692"/>
    </ligand>
</feature>
<feature type="binding site" evidence="1">
    <location>
        <position position="41"/>
    </location>
    <ligand>
        <name>FAD</name>
        <dbReference type="ChEBI" id="CHEBI:57692"/>
    </ligand>
</feature>
<feature type="binding site" evidence="1">
    <location>
        <position position="46"/>
    </location>
    <ligand>
        <name>FAD</name>
        <dbReference type="ChEBI" id="CHEBI:57692"/>
    </ligand>
</feature>
<feature type="binding site" evidence="1">
    <location>
        <position position="84"/>
    </location>
    <ligand>
        <name>FAD</name>
        <dbReference type="ChEBI" id="CHEBI:57692"/>
    </ligand>
</feature>
<feature type="binding site" evidence="1">
    <location>
        <position position="115"/>
    </location>
    <ligand>
        <name>FAD</name>
        <dbReference type="ChEBI" id="CHEBI:57692"/>
    </ligand>
</feature>
<feature type="binding site" evidence="1">
    <location>
        <position position="276"/>
    </location>
    <ligand>
        <name>FAD</name>
        <dbReference type="ChEBI" id="CHEBI:57692"/>
    </ligand>
</feature>
<feature type="binding site" evidence="1">
    <location>
        <position position="316"/>
    </location>
    <ligand>
        <name>FAD</name>
        <dbReference type="ChEBI" id="CHEBI:57692"/>
    </ligand>
</feature>
<comment type="catalytic activity">
    <reaction evidence="1">
        <text>2 reduced [2Fe-2S]-[ferredoxin] + NADP(+) + H(+) = 2 oxidized [2Fe-2S]-[ferredoxin] + NADPH</text>
        <dbReference type="Rhea" id="RHEA:20125"/>
        <dbReference type="Rhea" id="RHEA-COMP:10000"/>
        <dbReference type="Rhea" id="RHEA-COMP:10001"/>
        <dbReference type="ChEBI" id="CHEBI:15378"/>
        <dbReference type="ChEBI" id="CHEBI:33737"/>
        <dbReference type="ChEBI" id="CHEBI:33738"/>
        <dbReference type="ChEBI" id="CHEBI:57783"/>
        <dbReference type="ChEBI" id="CHEBI:58349"/>
        <dbReference type="EC" id="1.18.1.2"/>
    </reaction>
</comment>
<comment type="cofactor">
    <cofactor evidence="1">
        <name>FAD</name>
        <dbReference type="ChEBI" id="CHEBI:57692"/>
    </cofactor>
    <text evidence="1">Binds 1 FAD per subunit.</text>
</comment>
<comment type="subunit">
    <text evidence="1">Homodimer.</text>
</comment>
<comment type="similarity">
    <text evidence="1">Belongs to the ferredoxin--NADP reductase type 2 family.</text>
</comment>
<protein>
    <recommendedName>
        <fullName evidence="1">Ferredoxin--NADP reductase</fullName>
        <shortName evidence="1">FNR</shortName>
        <shortName evidence="1">Fd-NADP(+) reductase</shortName>
        <ecNumber evidence="1">1.18.1.2</ecNumber>
    </recommendedName>
</protein>
<organism>
    <name type="scientific">Lactobacillus johnsonii (strain CNCM I-12250 / La1 / NCC 533)</name>
    <dbReference type="NCBI Taxonomy" id="257314"/>
    <lineage>
        <taxon>Bacteria</taxon>
        <taxon>Bacillati</taxon>
        <taxon>Bacillota</taxon>
        <taxon>Bacilli</taxon>
        <taxon>Lactobacillales</taxon>
        <taxon>Lactobacillaceae</taxon>
        <taxon>Lactobacillus</taxon>
    </lineage>
</organism>
<proteinExistence type="inferred from homology"/>
<keyword id="KW-0274">FAD</keyword>
<keyword id="KW-0285">Flavoprotein</keyword>
<keyword id="KW-0521">NADP</keyword>
<keyword id="KW-0560">Oxidoreductase</keyword>
<accession>Q74KS6</accession>
<evidence type="ECO:0000255" key="1">
    <source>
        <dbReference type="HAMAP-Rule" id="MF_01685"/>
    </source>
</evidence>
<reference key="1">
    <citation type="journal article" date="2004" name="Proc. Natl. Acad. Sci. U.S.A.">
        <title>The genome sequence of the probiotic intestinal bacterium Lactobacillus johnsonii NCC 533.</title>
        <authorList>
            <person name="Pridmore R.D."/>
            <person name="Berger B."/>
            <person name="Desiere F."/>
            <person name="Vilanova D."/>
            <person name="Barretto C."/>
            <person name="Pittet A.-C."/>
            <person name="Zwahlen M.-C."/>
            <person name="Rouvet M."/>
            <person name="Altermann E."/>
            <person name="Barrangou R."/>
            <person name="Mollet B."/>
            <person name="Mercenier A."/>
            <person name="Klaenhammer T."/>
            <person name="Arigoni F."/>
            <person name="Schell M.A."/>
        </authorList>
    </citation>
    <scope>NUCLEOTIDE SEQUENCE [LARGE SCALE GENOMIC DNA]</scope>
    <source>
        <strain>CNCM I-1225 / La1 / NCC 533</strain>
    </source>
</reference>